<reference key="1">
    <citation type="submission" date="2006-08" db="EMBL/GenBank/DDBJ databases">
        <title>Complete sequence of Maricaulis maris MCS10.</title>
        <authorList>
            <consortium name="US DOE Joint Genome Institute"/>
            <person name="Copeland A."/>
            <person name="Lucas S."/>
            <person name="Lapidus A."/>
            <person name="Barry K."/>
            <person name="Detter J.C."/>
            <person name="Glavina del Rio T."/>
            <person name="Hammon N."/>
            <person name="Israni S."/>
            <person name="Dalin E."/>
            <person name="Tice H."/>
            <person name="Pitluck S."/>
            <person name="Saunders E."/>
            <person name="Brettin T."/>
            <person name="Bruce D."/>
            <person name="Han C."/>
            <person name="Tapia R."/>
            <person name="Gilna P."/>
            <person name="Schmutz J."/>
            <person name="Larimer F."/>
            <person name="Land M."/>
            <person name="Hauser L."/>
            <person name="Kyrpides N."/>
            <person name="Mikhailova N."/>
            <person name="Viollier P."/>
            <person name="Stephens C."/>
            <person name="Richardson P."/>
        </authorList>
    </citation>
    <scope>NUCLEOTIDE SEQUENCE [LARGE SCALE GENOMIC DNA]</scope>
    <source>
        <strain>MCS10</strain>
    </source>
</reference>
<keyword id="KW-1185">Reference proteome</keyword>
<keyword id="KW-0687">Ribonucleoprotein</keyword>
<keyword id="KW-0689">Ribosomal protein</keyword>
<keyword id="KW-0694">RNA-binding</keyword>
<keyword id="KW-0699">rRNA-binding</keyword>
<proteinExistence type="inferred from homology"/>
<organism>
    <name type="scientific">Maricaulis maris (strain MCS10)</name>
    <name type="common">Caulobacter maris</name>
    <dbReference type="NCBI Taxonomy" id="394221"/>
    <lineage>
        <taxon>Bacteria</taxon>
        <taxon>Pseudomonadati</taxon>
        <taxon>Pseudomonadota</taxon>
        <taxon>Alphaproteobacteria</taxon>
        <taxon>Maricaulales</taxon>
        <taxon>Maricaulaceae</taxon>
        <taxon>Maricaulis</taxon>
    </lineage>
</organism>
<name>RS17_MARMM</name>
<feature type="chain" id="PRO_1000054978" description="Small ribosomal subunit protein uS17">
    <location>
        <begin position="1"/>
        <end position="78"/>
    </location>
</feature>
<accession>Q0ANQ9</accession>
<gene>
    <name evidence="1" type="primary">rpsQ</name>
    <name type="ordered locus">Mmar10_1786</name>
</gene>
<sequence>MPKRILQGVVVSDKGAKTIVVRVERTFLHPLLRKTVRRTKRYHAHDEANAYKVGDQVQIQECAPKSKLKRWEVVTVAA</sequence>
<protein>
    <recommendedName>
        <fullName evidence="1">Small ribosomal subunit protein uS17</fullName>
    </recommendedName>
    <alternativeName>
        <fullName evidence="2">30S ribosomal protein S17</fullName>
    </alternativeName>
</protein>
<comment type="function">
    <text evidence="1">One of the primary rRNA binding proteins, it binds specifically to the 5'-end of 16S ribosomal RNA.</text>
</comment>
<comment type="subunit">
    <text evidence="1">Part of the 30S ribosomal subunit.</text>
</comment>
<comment type="similarity">
    <text evidence="1">Belongs to the universal ribosomal protein uS17 family.</text>
</comment>
<evidence type="ECO:0000255" key="1">
    <source>
        <dbReference type="HAMAP-Rule" id="MF_01345"/>
    </source>
</evidence>
<evidence type="ECO:0000305" key="2"/>
<dbReference type="EMBL" id="CP000449">
    <property type="protein sequence ID" value="ABI66078.1"/>
    <property type="molecule type" value="Genomic_DNA"/>
</dbReference>
<dbReference type="SMR" id="Q0ANQ9"/>
<dbReference type="STRING" id="394221.Mmar10_1786"/>
<dbReference type="KEGG" id="mmr:Mmar10_1786"/>
<dbReference type="eggNOG" id="COG0186">
    <property type="taxonomic scope" value="Bacteria"/>
</dbReference>
<dbReference type="HOGENOM" id="CLU_073626_1_1_5"/>
<dbReference type="OrthoDB" id="9811714at2"/>
<dbReference type="Proteomes" id="UP000001964">
    <property type="component" value="Chromosome"/>
</dbReference>
<dbReference type="GO" id="GO:0022627">
    <property type="term" value="C:cytosolic small ribosomal subunit"/>
    <property type="evidence" value="ECO:0007669"/>
    <property type="project" value="TreeGrafter"/>
</dbReference>
<dbReference type="GO" id="GO:0019843">
    <property type="term" value="F:rRNA binding"/>
    <property type="evidence" value="ECO:0007669"/>
    <property type="project" value="UniProtKB-UniRule"/>
</dbReference>
<dbReference type="GO" id="GO:0003735">
    <property type="term" value="F:structural constituent of ribosome"/>
    <property type="evidence" value="ECO:0007669"/>
    <property type="project" value="InterPro"/>
</dbReference>
<dbReference type="GO" id="GO:0006412">
    <property type="term" value="P:translation"/>
    <property type="evidence" value="ECO:0007669"/>
    <property type="project" value="UniProtKB-UniRule"/>
</dbReference>
<dbReference type="CDD" id="cd00364">
    <property type="entry name" value="Ribosomal_uS17"/>
    <property type="match status" value="1"/>
</dbReference>
<dbReference type="Gene3D" id="2.40.50.140">
    <property type="entry name" value="Nucleic acid-binding proteins"/>
    <property type="match status" value="1"/>
</dbReference>
<dbReference type="HAMAP" id="MF_01345_B">
    <property type="entry name" value="Ribosomal_uS17_B"/>
    <property type="match status" value="1"/>
</dbReference>
<dbReference type="InterPro" id="IPR012340">
    <property type="entry name" value="NA-bd_OB-fold"/>
</dbReference>
<dbReference type="InterPro" id="IPR000266">
    <property type="entry name" value="Ribosomal_uS17"/>
</dbReference>
<dbReference type="InterPro" id="IPR019984">
    <property type="entry name" value="Ribosomal_uS17_bact/chlr"/>
</dbReference>
<dbReference type="NCBIfam" id="NF004123">
    <property type="entry name" value="PRK05610.1"/>
    <property type="match status" value="1"/>
</dbReference>
<dbReference type="NCBIfam" id="TIGR03635">
    <property type="entry name" value="uS17_bact"/>
    <property type="match status" value="1"/>
</dbReference>
<dbReference type="PANTHER" id="PTHR10744">
    <property type="entry name" value="40S RIBOSOMAL PROTEIN S11 FAMILY MEMBER"/>
    <property type="match status" value="1"/>
</dbReference>
<dbReference type="PANTHER" id="PTHR10744:SF1">
    <property type="entry name" value="SMALL RIBOSOMAL SUBUNIT PROTEIN US17M"/>
    <property type="match status" value="1"/>
</dbReference>
<dbReference type="Pfam" id="PF00366">
    <property type="entry name" value="Ribosomal_S17"/>
    <property type="match status" value="1"/>
</dbReference>
<dbReference type="PRINTS" id="PR00973">
    <property type="entry name" value="RIBOSOMALS17"/>
</dbReference>
<dbReference type="SUPFAM" id="SSF50249">
    <property type="entry name" value="Nucleic acid-binding proteins"/>
    <property type="match status" value="1"/>
</dbReference>